<feature type="chain" id="PRO_1000068877" description="DNA-directed RNA polymerase subunit epsilon">
    <location>
        <begin position="1"/>
        <end position="72"/>
    </location>
</feature>
<keyword id="KW-0002">3D-structure</keyword>
<keyword id="KW-0240">DNA-directed RNA polymerase</keyword>
<keyword id="KW-0548">Nucleotidyltransferase</keyword>
<keyword id="KW-1185">Reference proteome</keyword>
<keyword id="KW-0804">Transcription</keyword>
<keyword id="KW-0808">Transferase</keyword>
<gene>
    <name evidence="1" type="primary">rpoY</name>
    <name type="ordered locus">SAOUHSC_01036</name>
</gene>
<comment type="function">
    <text evidence="1">A non-essential component of RNA polymerase (RNAP).</text>
</comment>
<comment type="catalytic activity">
    <reaction evidence="1">
        <text>RNA(n) + a ribonucleoside 5'-triphosphate = RNA(n+1) + diphosphate</text>
        <dbReference type="Rhea" id="RHEA:21248"/>
        <dbReference type="Rhea" id="RHEA-COMP:14527"/>
        <dbReference type="Rhea" id="RHEA-COMP:17342"/>
        <dbReference type="ChEBI" id="CHEBI:33019"/>
        <dbReference type="ChEBI" id="CHEBI:61557"/>
        <dbReference type="ChEBI" id="CHEBI:140395"/>
        <dbReference type="EC" id="2.7.7.6"/>
    </reaction>
</comment>
<comment type="subunit">
    <text evidence="1">RNAP is composed of a core of 2 alpha, a beta and a beta' subunit. The core is associated with a delta subunit, and at least one of epsilon or omega. When a sigma factor is associated with the core the holoenzyme is formed, which can initiate transcription.</text>
</comment>
<comment type="similarity">
    <text evidence="1">Belongs to the RNA polymerase subunit epsilon family.</text>
</comment>
<sequence length="72" mass="8752">MAVFKVFYQHNRDEVIVRENTQSLYVEAQTEEQVRRYLKDRNFNIEFITKLEGAHLDYEKENSEHFNVEIAK</sequence>
<organism>
    <name type="scientific">Staphylococcus aureus (strain NCTC 8325 / PS 47)</name>
    <dbReference type="NCBI Taxonomy" id="93061"/>
    <lineage>
        <taxon>Bacteria</taxon>
        <taxon>Bacillati</taxon>
        <taxon>Bacillota</taxon>
        <taxon>Bacilli</taxon>
        <taxon>Bacillales</taxon>
        <taxon>Staphylococcaceae</taxon>
        <taxon>Staphylococcus</taxon>
    </lineage>
</organism>
<proteinExistence type="evidence at protein level"/>
<dbReference type="EC" id="2.7.7.6" evidence="1"/>
<dbReference type="EMBL" id="CP000253">
    <property type="protein sequence ID" value="ABD30156.1"/>
    <property type="molecule type" value="Genomic_DNA"/>
</dbReference>
<dbReference type="RefSeq" id="WP_000257888.1">
    <property type="nucleotide sequence ID" value="NZ_LS483365.1"/>
</dbReference>
<dbReference type="RefSeq" id="YP_499585.1">
    <property type="nucleotide sequence ID" value="NC_007795.1"/>
</dbReference>
<dbReference type="PDB" id="8X6F">
    <property type="method" value="EM"/>
    <property type="resolution" value="3.70 A"/>
    <property type="chains" value="G=1-72"/>
</dbReference>
<dbReference type="PDB" id="8X6G">
    <property type="method" value="EM"/>
    <property type="resolution" value="3.30 A"/>
    <property type="chains" value="G=1-72"/>
</dbReference>
<dbReference type="PDBsum" id="8X6F"/>
<dbReference type="PDBsum" id="8X6G"/>
<dbReference type="SMR" id="Q2FZG8"/>
<dbReference type="STRING" id="93061.SAOUHSC_01036"/>
<dbReference type="PaxDb" id="1280-SAXN108_1086"/>
<dbReference type="GeneID" id="3919884"/>
<dbReference type="KEGG" id="sao:SAOUHSC_01036"/>
<dbReference type="PATRIC" id="fig|93061.5.peg.952"/>
<dbReference type="eggNOG" id="COG5503">
    <property type="taxonomic scope" value="Bacteria"/>
</dbReference>
<dbReference type="HOGENOM" id="CLU_187518_1_0_9"/>
<dbReference type="OrthoDB" id="2147503at2"/>
<dbReference type="PRO" id="PR:Q2FZG8"/>
<dbReference type="Proteomes" id="UP000008816">
    <property type="component" value="Chromosome"/>
</dbReference>
<dbReference type="GO" id="GO:0000428">
    <property type="term" value="C:DNA-directed RNA polymerase complex"/>
    <property type="evidence" value="ECO:0007669"/>
    <property type="project" value="UniProtKB-KW"/>
</dbReference>
<dbReference type="GO" id="GO:0003677">
    <property type="term" value="F:DNA binding"/>
    <property type="evidence" value="ECO:0007669"/>
    <property type="project" value="UniProtKB-UniRule"/>
</dbReference>
<dbReference type="GO" id="GO:0003899">
    <property type="term" value="F:DNA-directed RNA polymerase activity"/>
    <property type="evidence" value="ECO:0007669"/>
    <property type="project" value="UniProtKB-UniRule"/>
</dbReference>
<dbReference type="GO" id="GO:0006351">
    <property type="term" value="P:DNA-templated transcription"/>
    <property type="evidence" value="ECO:0007669"/>
    <property type="project" value="UniProtKB-UniRule"/>
</dbReference>
<dbReference type="Gene3D" id="3.10.20.730">
    <property type="entry name" value="RNAP, epsilon subunit-like"/>
    <property type="match status" value="1"/>
</dbReference>
<dbReference type="HAMAP" id="MF_01553">
    <property type="entry name" value="RNApol_bact_RpoY"/>
    <property type="match status" value="1"/>
</dbReference>
<dbReference type="InterPro" id="IPR009907">
    <property type="entry name" value="RpoY"/>
</dbReference>
<dbReference type="NCBIfam" id="NF010188">
    <property type="entry name" value="PRK13667.1"/>
    <property type="match status" value="1"/>
</dbReference>
<dbReference type="Pfam" id="PF07288">
    <property type="entry name" value="RpoY"/>
    <property type="match status" value="1"/>
</dbReference>
<accession>Q2FZG8</accession>
<evidence type="ECO:0000255" key="1">
    <source>
        <dbReference type="HAMAP-Rule" id="MF_01553"/>
    </source>
</evidence>
<reference key="1">
    <citation type="book" date="2006" name="Gram positive pathogens, 2nd edition">
        <title>The Staphylococcus aureus NCTC 8325 genome.</title>
        <editorList>
            <person name="Fischetti V."/>
            <person name="Novick R."/>
            <person name="Ferretti J."/>
            <person name="Portnoy D."/>
            <person name="Rood J."/>
        </editorList>
        <authorList>
            <person name="Gillaspy A.F."/>
            <person name="Worrell V."/>
            <person name="Orvis J."/>
            <person name="Roe B.A."/>
            <person name="Dyer D.W."/>
            <person name="Iandolo J.J."/>
        </authorList>
    </citation>
    <scope>NUCLEOTIDE SEQUENCE [LARGE SCALE GENOMIC DNA]</scope>
    <source>
        <strain>NCTC 8325 / PS 47</strain>
    </source>
</reference>
<protein>
    <recommendedName>
        <fullName evidence="1">DNA-directed RNA polymerase subunit epsilon</fullName>
        <shortName evidence="1">RNAP epsilon subunit</shortName>
        <ecNumber evidence="1">2.7.7.6</ecNumber>
    </recommendedName>
    <alternativeName>
        <fullName evidence="1">RNA polymerase epsilon subunit</fullName>
    </alternativeName>
    <alternativeName>
        <fullName evidence="1">Transcriptase subunit epsilon</fullName>
    </alternativeName>
</protein>
<name>RPOY_STAA8</name>